<protein>
    <recommendedName>
        <fullName>Dihydroorotate dehydrogenase (quinone), mitochondrial</fullName>
        <shortName>DHOD</shortName>
        <shortName>DHODase</shortName>
        <shortName>DHOdehase</shortName>
        <ecNumber>1.3.5.2</ecNumber>
    </recommendedName>
    <alternativeName>
        <fullName>Dihydroorotate oxidase</fullName>
    </alternativeName>
</protein>
<sequence>MSGLFETLGRRALFAFDAEQAHGLSIAGLKTGLVTGSAPNDLALSVKVAGLQFPNPLGMAAGYDKNAEVPDALLKLGFGFTEIGTITPRPQSGNPRPRIFRLVDDKAVINRLGFNNEGHDAAFKRLSQRAGKSGIVGVNIGANKDAEDRIADYVAGIRRFYQLARYFTVNISSPNTPGLRNLQARDSLRELLSRVLEARNEEGKMCTLKRPVFLKIAPDLANEELDDIAAEATEQKLDGIIISNTTLSRAGLKSAGGRDETGGLSGAPLFDRSTIVLARMRERVGPDMPLIGVGGVDSAETALTKVKAGARSRPALYGPDLSRPEPAY</sequence>
<name>PYRD_CYCAE</name>
<organism>
    <name type="scientific">Cyclocybe aegerita</name>
    <name type="common">Black poplar mushroom</name>
    <name type="synonym">Agrocybe aegerita</name>
    <dbReference type="NCBI Taxonomy" id="1973307"/>
    <lineage>
        <taxon>Eukaryota</taxon>
        <taxon>Fungi</taxon>
        <taxon>Dikarya</taxon>
        <taxon>Basidiomycota</taxon>
        <taxon>Agaricomycotina</taxon>
        <taxon>Agaricomycetes</taxon>
        <taxon>Agaricomycetidae</taxon>
        <taxon>Agaricales</taxon>
        <taxon>Agaricineae</taxon>
        <taxon>Bolbitiaceae</taxon>
        <taxon>Cyclocybe</taxon>
    </lineage>
</organism>
<reference key="1">
    <citation type="journal article" date="1992" name="Gene">
        <title>Sequence of the URA1 gene encoding dihydroorotate dehydrogenase from the basidiomycete fungus Agrocybe aegerita.</title>
        <authorList>
            <person name="Noel T."/>
            <person name="Labarere J."/>
        </authorList>
    </citation>
    <scope>NUCLEOTIDE SEQUENCE [GENOMIC DNA]</scope>
    <source>
        <strain>WT-2 / G30</strain>
    </source>
</reference>
<dbReference type="EC" id="1.3.5.2"/>
<dbReference type="EMBL" id="M90295">
    <property type="protein sequence ID" value="AAA32636.1"/>
    <property type="molecule type" value="Genomic_DNA"/>
</dbReference>
<dbReference type="PIR" id="JN0453">
    <property type="entry name" value="JN0453"/>
</dbReference>
<dbReference type="SMR" id="P28294"/>
<dbReference type="UniPathway" id="UPA00070">
    <property type="reaction ID" value="UER00946"/>
</dbReference>
<dbReference type="GO" id="GO:0005743">
    <property type="term" value="C:mitochondrial inner membrane"/>
    <property type="evidence" value="ECO:0007669"/>
    <property type="project" value="UniProtKB-SubCell"/>
</dbReference>
<dbReference type="GO" id="GO:0106430">
    <property type="term" value="F:dihydroorotate dehydrogenase (quinone) activity"/>
    <property type="evidence" value="ECO:0007669"/>
    <property type="project" value="UniProtKB-EC"/>
</dbReference>
<dbReference type="GO" id="GO:0006207">
    <property type="term" value="P:'de novo' pyrimidine nucleobase biosynthetic process"/>
    <property type="evidence" value="ECO:0007669"/>
    <property type="project" value="InterPro"/>
</dbReference>
<dbReference type="GO" id="GO:0044205">
    <property type="term" value="P:'de novo' UMP biosynthetic process"/>
    <property type="evidence" value="ECO:0007669"/>
    <property type="project" value="UniProtKB-UniPathway"/>
</dbReference>
<dbReference type="CDD" id="cd04738">
    <property type="entry name" value="DHOD_2_like"/>
    <property type="match status" value="1"/>
</dbReference>
<dbReference type="Gene3D" id="3.20.20.70">
    <property type="entry name" value="Aldolase class I"/>
    <property type="match status" value="1"/>
</dbReference>
<dbReference type="InterPro" id="IPR013785">
    <property type="entry name" value="Aldolase_TIM"/>
</dbReference>
<dbReference type="InterPro" id="IPR050074">
    <property type="entry name" value="DHO_dehydrogenase"/>
</dbReference>
<dbReference type="InterPro" id="IPR012135">
    <property type="entry name" value="Dihydroorotate_DH_1_2"/>
</dbReference>
<dbReference type="InterPro" id="IPR005719">
    <property type="entry name" value="Dihydroorotate_DH_2"/>
</dbReference>
<dbReference type="InterPro" id="IPR005720">
    <property type="entry name" value="Dihydroorotate_DH_cat"/>
</dbReference>
<dbReference type="InterPro" id="IPR001295">
    <property type="entry name" value="Dihydroorotate_DH_CS"/>
</dbReference>
<dbReference type="NCBIfam" id="NF003645">
    <property type="entry name" value="PRK05286.1-2"/>
    <property type="match status" value="1"/>
</dbReference>
<dbReference type="NCBIfam" id="NF003652">
    <property type="entry name" value="PRK05286.2-5"/>
    <property type="match status" value="1"/>
</dbReference>
<dbReference type="NCBIfam" id="TIGR01036">
    <property type="entry name" value="pyrD_sub2"/>
    <property type="match status" value="1"/>
</dbReference>
<dbReference type="PANTHER" id="PTHR48109:SF4">
    <property type="entry name" value="DIHYDROOROTATE DEHYDROGENASE (QUINONE), MITOCHONDRIAL"/>
    <property type="match status" value="1"/>
</dbReference>
<dbReference type="PANTHER" id="PTHR48109">
    <property type="entry name" value="DIHYDROOROTATE DEHYDROGENASE (QUINONE), MITOCHONDRIAL-RELATED"/>
    <property type="match status" value="1"/>
</dbReference>
<dbReference type="Pfam" id="PF01180">
    <property type="entry name" value="DHO_dh"/>
    <property type="match status" value="1"/>
</dbReference>
<dbReference type="PIRSF" id="PIRSF000164">
    <property type="entry name" value="DHO_oxidase"/>
    <property type="match status" value="1"/>
</dbReference>
<dbReference type="SUPFAM" id="SSF51395">
    <property type="entry name" value="FMN-linked oxidoreductases"/>
    <property type="match status" value="1"/>
</dbReference>
<dbReference type="PROSITE" id="PS00911">
    <property type="entry name" value="DHODEHASE_1"/>
    <property type="match status" value="1"/>
</dbReference>
<dbReference type="PROSITE" id="PS00912">
    <property type="entry name" value="DHODEHASE_2"/>
    <property type="match status" value="1"/>
</dbReference>
<accession>P28294</accession>
<gene>
    <name type="primary">URA1</name>
</gene>
<keyword id="KW-0285">Flavoprotein</keyword>
<keyword id="KW-0288">FMN</keyword>
<keyword id="KW-0472">Membrane</keyword>
<keyword id="KW-0496">Mitochondrion</keyword>
<keyword id="KW-0999">Mitochondrion inner membrane</keyword>
<keyword id="KW-0560">Oxidoreductase</keyword>
<keyword id="KW-0665">Pyrimidine biosynthesis</keyword>
<keyword id="KW-0809">Transit peptide</keyword>
<keyword id="KW-0812">Transmembrane</keyword>
<keyword id="KW-1133">Transmembrane helix</keyword>
<proteinExistence type="inferred from homology"/>
<evidence type="ECO:0000250" key="1"/>
<evidence type="ECO:0000255" key="2"/>
<evidence type="ECO:0000305" key="3"/>
<comment type="function">
    <text evidence="1">Catalyzes the conversion of dihydroorotate to orotate with quinone as electron acceptor.</text>
</comment>
<comment type="catalytic activity">
    <reaction>
        <text>(S)-dihydroorotate + a quinone = orotate + a quinol</text>
        <dbReference type="Rhea" id="RHEA:30187"/>
        <dbReference type="ChEBI" id="CHEBI:24646"/>
        <dbReference type="ChEBI" id="CHEBI:30839"/>
        <dbReference type="ChEBI" id="CHEBI:30864"/>
        <dbReference type="ChEBI" id="CHEBI:132124"/>
        <dbReference type="EC" id="1.3.5.2"/>
    </reaction>
</comment>
<comment type="cofactor">
    <cofactor evidence="1">
        <name>FMN</name>
        <dbReference type="ChEBI" id="CHEBI:58210"/>
    </cofactor>
    <text evidence="1">Binds 1 FMN per subunit.</text>
</comment>
<comment type="pathway">
    <text>Pyrimidine metabolism; UMP biosynthesis via de novo pathway; orotate from (S)-dihydroorotate (quinone route): step 1/1.</text>
</comment>
<comment type="subcellular location">
    <subcellularLocation>
        <location evidence="1">Mitochondrion inner membrane</location>
        <topology evidence="3">Single-pass membrane protein</topology>
    </subcellularLocation>
</comment>
<comment type="similarity">
    <text evidence="3">Belongs to the dihydroorotate dehydrogenase family. Type 2 subfamily.</text>
</comment>
<feature type="transit peptide" description="Mitochondrion" evidence="2">
    <location>
        <begin position="1"/>
        <end status="unknown"/>
    </location>
</feature>
<feature type="chain" id="PRO_0000148499" description="Dihydroorotate dehydrogenase (quinone), mitochondrial">
    <location>
        <begin status="unknown"/>
        <end position="328"/>
    </location>
</feature>
<feature type="transmembrane region" description="Helical" evidence="2">
    <location>
        <begin position="21"/>
        <end position="38"/>
    </location>
</feature>
<feature type="active site" description="Nucleophile" evidence="1">
    <location>
        <position position="173"/>
    </location>
</feature>
<feature type="binding site" evidence="1">
    <location>
        <begin position="61"/>
        <end position="65"/>
    </location>
    <ligand>
        <name>FMN</name>
        <dbReference type="ChEBI" id="CHEBI:58210"/>
    </ligand>
</feature>
<feature type="binding site" evidence="1">
    <location>
        <position position="65"/>
    </location>
    <ligand>
        <name>substrate</name>
    </ligand>
</feature>
<feature type="binding site" evidence="1">
    <location>
        <position position="85"/>
    </location>
    <ligand>
        <name>FMN</name>
        <dbReference type="ChEBI" id="CHEBI:58210"/>
    </ligand>
</feature>
<feature type="binding site" evidence="1">
    <location>
        <begin position="110"/>
        <end position="114"/>
    </location>
    <ligand>
        <name>substrate</name>
    </ligand>
</feature>
<feature type="binding site" evidence="1">
    <location>
        <position position="139"/>
    </location>
    <ligand>
        <name>FMN</name>
        <dbReference type="ChEBI" id="CHEBI:58210"/>
    </ligand>
</feature>
<feature type="binding site" evidence="1">
    <location>
        <begin position="170"/>
        <end position="175"/>
    </location>
    <ligand>
        <name>substrate</name>
    </ligand>
</feature>
<feature type="binding site" evidence="1">
    <location>
        <position position="170"/>
    </location>
    <ligand>
        <name>FMN</name>
        <dbReference type="ChEBI" id="CHEBI:58210"/>
    </ligand>
</feature>
<feature type="binding site" evidence="1">
    <location>
        <position position="215"/>
    </location>
    <ligand>
        <name>FMN</name>
        <dbReference type="ChEBI" id="CHEBI:58210"/>
    </ligand>
</feature>
<feature type="binding site" evidence="1">
    <location>
        <position position="243"/>
    </location>
    <ligand>
        <name>FMN</name>
        <dbReference type="ChEBI" id="CHEBI:58210"/>
    </ligand>
</feature>
<feature type="binding site" evidence="1">
    <location>
        <begin position="244"/>
        <end position="245"/>
    </location>
    <ligand>
        <name>substrate</name>
    </ligand>
</feature>
<feature type="binding site" evidence="1">
    <location>
        <position position="266"/>
    </location>
    <ligand>
        <name>FMN</name>
        <dbReference type="ChEBI" id="CHEBI:58210"/>
    </ligand>
</feature>
<feature type="binding site" evidence="1">
    <location>
        <position position="295"/>
    </location>
    <ligand>
        <name>FMN</name>
        <dbReference type="ChEBI" id="CHEBI:58210"/>
    </ligand>
</feature>